<dbReference type="EMBL" id="X74443">
    <property type="protein sequence ID" value="CAA52454.1"/>
    <property type="molecule type" value="mRNA"/>
</dbReference>
<dbReference type="PIR" id="S36405">
    <property type="entry name" value="S36405"/>
</dbReference>
<dbReference type="SMR" id="Q08823"/>
<dbReference type="Proteomes" id="UP000180906">
    <property type="component" value="Genome"/>
</dbReference>
<dbReference type="GO" id="GO:0019029">
    <property type="term" value="C:helical viral capsid"/>
    <property type="evidence" value="ECO:0007669"/>
    <property type="project" value="UniProtKB-KW"/>
</dbReference>
<dbReference type="GO" id="GO:0030430">
    <property type="term" value="C:host cell cytoplasm"/>
    <property type="evidence" value="ECO:0007669"/>
    <property type="project" value="UniProtKB-SubCell"/>
</dbReference>
<dbReference type="GO" id="GO:1990904">
    <property type="term" value="C:ribonucleoprotein complex"/>
    <property type="evidence" value="ECO:0007669"/>
    <property type="project" value="UniProtKB-KW"/>
</dbReference>
<dbReference type="GO" id="GO:0019013">
    <property type="term" value="C:viral nucleocapsid"/>
    <property type="evidence" value="ECO:0007669"/>
    <property type="project" value="UniProtKB-KW"/>
</dbReference>
<dbReference type="GO" id="GO:0003723">
    <property type="term" value="F:RNA binding"/>
    <property type="evidence" value="ECO:0007669"/>
    <property type="project" value="UniProtKB-KW"/>
</dbReference>
<dbReference type="GO" id="GO:0005198">
    <property type="term" value="F:structural molecule activity"/>
    <property type="evidence" value="ECO:0007669"/>
    <property type="project" value="InterPro"/>
</dbReference>
<dbReference type="GO" id="GO:0039579">
    <property type="term" value="P:symbiont-mediated suppression of host ISG15-protein conjugation"/>
    <property type="evidence" value="ECO:0000269"/>
    <property type="project" value="SigSci"/>
</dbReference>
<dbReference type="GO" id="GO:0039514">
    <property type="term" value="P:symbiont-mediated suppression of host JAK-STAT cascade"/>
    <property type="evidence" value="ECO:0000269"/>
    <property type="project" value="SigSci"/>
</dbReference>
<dbReference type="InterPro" id="IPR002021">
    <property type="entry name" value="Paramyx_ncap"/>
</dbReference>
<dbReference type="Pfam" id="PF00973">
    <property type="entry name" value="Paramyxo_ncap"/>
    <property type="match status" value="1"/>
</dbReference>
<sequence>MATLLKSLALFKRNKDKAPTASGSGGAIRGIKNVIIVPIPGDSSIITRSRLLDRLVRLAGDPDINGSKLTGVMISMLSLFVESPGQLIQRITDDPDVSIRLVEVVQSTRSQSGLTFASRGADLDNEADMYFSTEGPSSGSKKRINWFENREIIDIEVQDAEEFNMLLASILAQVWILLAKAVTAPDTAADSELRRWVKYTQQRRVIGEFRLDKGWLDAVRNRIAEDLSLRRFMVSLILDIKRTPGNKPRIAEMICDIDNYIVEAGLASFILTIKFGIETMYPALGLHEFAGELSTIESLMNLYQQLGEVAPYMVILENSIQNKFSAGAYPLLWSYAMGVGVELENSMGGLNFGRSYFDPAYFRLGQEMVRRSAGKVSSVIAAELGITAEEAKLVSEIASQTGDERTVRGTGPRQAQVSFLQHKTDEGESPTPATREEVKAAIPNGSEGRDTKRTRSGKPRGETPGQLLPEIMQEDELSRESSQNPREAQRSAEALFRLQAMAKILEDQEEGEDNSQIYNDKDLLS</sequence>
<organism>
    <name type="scientific">Peste-des-petits-ruminants virus</name>
    <name type="common">PPRV</name>
    <dbReference type="NCBI Taxonomy" id="2593991"/>
    <lineage>
        <taxon>Viruses</taxon>
        <taxon>Riboviria</taxon>
        <taxon>Orthornavirae</taxon>
        <taxon>Negarnaviricota</taxon>
        <taxon>Haploviricotina</taxon>
        <taxon>Monjiviricetes</taxon>
        <taxon>Mononegavirales</taxon>
        <taxon>Paramyxoviridae</taxon>
        <taxon>Orthoparamyxovirinae</taxon>
        <taxon>Morbillivirus</taxon>
        <taxon>Morbillivirus caprinae</taxon>
    </lineage>
</organism>
<proteinExistence type="evidence at protein level"/>
<accession>Q08823</accession>
<comment type="function">
    <text evidence="2 4 5">Forms the helical nucleocapsid (NC) in a ratio of 1 N per 6 ribonucleotides, protecting the genome from nucleases (By similarity). The encapsidated genomic RNA serves as template for transcription and replication; encapsidation by N is coupled to RNA synthesis (By similarity). Forms the encapsidation complex with the phosphoprotein protein P (By similarity). Before encapsidation, the newly synthesized free N protein, so-called N0, is chaperoned by P (By similarity). Participates, together with P, in the formation of viral factories (viroplasms), which are large inclusions in the host cytoplasm where replication takes place (By similarity).</text>
</comment>
<comment type="subunit">
    <text evidence="1 4 5 9 10 12">Homomultimer; forms the nucleocapsid (PubMed:17875339). Binds to viral genomic RNA (By similarity). N0 interacts with the phosphoprotein (via N-terminus); this interaction allows P to chaperon N0 to avoid N polymerization before encapsidation (Probable). Interacts as N-RNA template with the phosphoprotein (via C-terminus); this interaction positions the polymerase on the template (By similarity). Interacts with the phosphoprotein; this interaction leads to the formation of membraneless organelles that function as viral replication factories (By similarity). Interacts with host ISG15; this interaction disrupts the activity of the N0-P complex (PubMed:36036587).</text>
</comment>
<comment type="subcellular location">
    <subcellularLocation>
        <location evidence="7">Virion</location>
    </subcellularLocation>
    <subcellularLocation>
        <location evidence="7">Host cytoplasm</location>
    </subcellularLocation>
</comment>
<comment type="domain">
    <text evidence="6">Ncore is globular and carries regions required for N self-assembly and RNA-binding. Ntail is an intrinsically disordered monomeric domain in the C-terminus.</text>
</comment>
<comment type="similarity">
    <text evidence="11">Belongs to the paramyxoviruses nucleocapsid family.</text>
</comment>
<feature type="chain" id="PRO_0000142674" description="Nucleoprotein">
    <location>
        <begin position="1"/>
        <end position="525"/>
    </location>
</feature>
<feature type="region of interest" description="Ncore" evidence="2">
    <location>
        <begin position="1"/>
        <end position="403"/>
    </location>
</feature>
<feature type="region of interest" description="RNA packaging and organization of the helical nucleocapsid" evidence="6">
    <location>
        <begin position="1"/>
        <end position="375"/>
    </location>
</feature>
<feature type="region of interest" description="Homomultimerization" evidence="3">
    <location>
        <begin position="1"/>
        <end position="36"/>
    </location>
</feature>
<feature type="region of interest" description="Homomultimerization" evidence="3">
    <location>
        <begin position="373"/>
        <end position="391"/>
    </location>
</feature>
<feature type="region of interest" description="Ntail" evidence="2">
    <location>
        <begin position="404"/>
        <end position="525"/>
    </location>
</feature>
<feature type="region of interest" description="Disordered" evidence="8">
    <location>
        <begin position="418"/>
        <end position="492"/>
    </location>
</feature>
<feature type="region of interest" description="Interaction with the phosphoprotein" evidence="5">
    <location>
        <begin position="477"/>
        <end position="505"/>
    </location>
</feature>
<feature type="region of interest" description="Disordered" evidence="8">
    <location>
        <begin position="506"/>
        <end position="525"/>
    </location>
</feature>
<feature type="binding site" evidence="5">
    <location>
        <position position="180"/>
    </location>
    <ligand>
        <name>RNA</name>
        <dbReference type="ChEBI" id="CHEBI:33697"/>
    </ligand>
</feature>
<feature type="binding site" evidence="5">
    <location>
        <position position="195"/>
    </location>
    <ligand>
        <name>RNA</name>
        <dbReference type="ChEBI" id="CHEBI:33697"/>
    </ligand>
</feature>
<feature type="binding site" evidence="5">
    <location>
        <position position="202"/>
    </location>
    <ligand>
        <name>RNA</name>
        <dbReference type="ChEBI" id="CHEBI:33697"/>
    </ligand>
</feature>
<feature type="binding site" evidence="5">
    <location>
        <position position="260"/>
    </location>
    <ligand>
        <name>RNA</name>
        <dbReference type="ChEBI" id="CHEBI:33697"/>
    </ligand>
</feature>
<feature type="binding site" evidence="5">
    <location>
        <position position="351"/>
    </location>
    <ligand>
        <name>RNA</name>
        <dbReference type="ChEBI" id="CHEBI:33697"/>
    </ligand>
</feature>
<evidence type="ECO:0000250" key="1">
    <source>
        <dbReference type="UniProtKB" id="O57286"/>
    </source>
</evidence>
<evidence type="ECO:0000250" key="2">
    <source>
        <dbReference type="UniProtKB" id="P06159"/>
    </source>
</evidence>
<evidence type="ECO:0000250" key="3">
    <source>
        <dbReference type="UniProtKB" id="P10050"/>
    </source>
</evidence>
<evidence type="ECO:0000250" key="4">
    <source>
        <dbReference type="UniProtKB" id="Q07097"/>
    </source>
</evidence>
<evidence type="ECO:0000250" key="5">
    <source>
        <dbReference type="UniProtKB" id="Q77M43"/>
    </source>
</evidence>
<evidence type="ECO:0000250" key="6">
    <source>
        <dbReference type="UniProtKB" id="Q89933"/>
    </source>
</evidence>
<evidence type="ECO:0000250" key="7">
    <source>
        <dbReference type="UniProtKB" id="Q9WMB5"/>
    </source>
</evidence>
<evidence type="ECO:0000256" key="8">
    <source>
        <dbReference type="SAM" id="MobiDB-lite"/>
    </source>
</evidence>
<evidence type="ECO:0000269" key="9">
    <source>
    </source>
</evidence>
<evidence type="ECO:0000269" key="10">
    <source>
    </source>
</evidence>
<evidence type="ECO:0000305" key="11"/>
<evidence type="ECO:0000305" key="12">
    <source>
    </source>
</evidence>
<name>NCAP_PPRV</name>
<keyword id="KW-0167">Capsid protein</keyword>
<keyword id="KW-1139">Helical capsid protein</keyword>
<keyword id="KW-1035">Host cytoplasm</keyword>
<keyword id="KW-0945">Host-virus interaction</keyword>
<keyword id="KW-1185">Reference proteome</keyword>
<keyword id="KW-0687">Ribonucleoprotein</keyword>
<keyword id="KW-0694">RNA-binding</keyword>
<keyword id="KW-0543">Viral nucleoprotein</keyword>
<keyword id="KW-0946">Virion</keyword>
<protein>
    <recommendedName>
        <fullName>Nucleoprotein</fullName>
    </recommendedName>
    <alternativeName>
        <fullName>Nucleocapsid protein</fullName>
        <shortName>NP</shortName>
        <shortName>Protein N</shortName>
    </alternativeName>
</protein>
<organismHost>
    <name type="scientific">Capra hircus</name>
    <name type="common">Goat</name>
    <dbReference type="NCBI Taxonomy" id="9925"/>
</organismHost>
<organismHost>
    <name type="scientific">Ovis aries</name>
    <name type="common">Sheep</name>
    <dbReference type="NCBI Taxonomy" id="9940"/>
</organismHost>
<reference key="1">
    <citation type="journal article" date="1994" name="J. Gen. Virol.">
        <title>Cloning of the nucleocapsid protein gene of peste-des-petits-ruminants virus: relationship to other morbilliviruses.</title>
        <authorList>
            <person name="Diallo A."/>
            <person name="Barrett T."/>
            <person name="Barbron M."/>
            <person name="Meyer G."/>
            <person name="Lefevre P.C."/>
        </authorList>
    </citation>
    <scope>NUCLEOTIDE SEQUENCE [MRNA]</scope>
</reference>
<reference key="2">
    <citation type="journal article" date="2003" name="J. Virol.">
        <title>Measles virus (MV) nucleoprotein binds to a novel cell surface receptor distinct from FcgammaRII via its C-terminal domain: role in MV-induced immunosuppression.</title>
        <authorList>
            <person name="Laine D."/>
            <person name="Trescol-Biemont M.C."/>
            <person name="Longhi S."/>
            <person name="Libeau G."/>
            <person name="Marie J.C."/>
            <person name="Vidalain P.O."/>
            <person name="Azocar O."/>
            <person name="Diallo A."/>
            <person name="Canard B."/>
            <person name="Rabourdin-Combe C."/>
            <person name="Valentin H."/>
        </authorList>
    </citation>
    <scope>INTERACTION WITH HUMAN NR PROTEIN</scope>
</reference>
<reference key="3">
    <citation type="journal article" date="2008" name="Virus Res.">
        <title>Mapping the Peste des Petits Ruminants virus nucleoprotein: identification of two domains involved in protein self-association.</title>
        <authorList>
            <person name="Bodjo S.C."/>
            <person name="Lelenta M."/>
            <person name="Couacy-Hymann E."/>
            <person name="Kwiatek O."/>
            <person name="Albina E."/>
            <person name="Gargani D."/>
            <person name="Libeau G."/>
            <person name="Diallo A."/>
        </authorList>
    </citation>
    <scope>SUBUNIT</scope>
</reference>
<reference key="4">
    <citation type="journal article" date="2022" name="Microbiol. Spectr.">
        <title>Free ISG15 Inhibits the Replication of Peste des Petits Ruminants Virus by Breaking the Interaction of Nucleoprotein and Phosphoprotein.</title>
        <authorList>
            <person name="Tang J."/>
            <person name="Tang A."/>
            <person name="Jia N."/>
            <person name="Du H."/>
            <person name="Liu C."/>
            <person name="Zhu J."/>
            <person name="Li C."/>
            <person name="Meng C."/>
            <person name="Liu G."/>
        </authorList>
    </citation>
    <scope>INTERACTION WITH THE PHOSPHOPROTEIN</scope>
    <scope>INTERACTION WITH HOST ISG15</scope>
    <source>
        <strain>vaccine strain Nigeria 75/1</strain>
    </source>
</reference>
<gene>
    <name type="primary">N</name>
    <name type="synonym">NP</name>
</gene>